<dbReference type="EC" id="2.7.9.3" evidence="2"/>
<dbReference type="EMBL" id="AL111168">
    <property type="protein sequence ID" value="CAL35610.1"/>
    <property type="status" value="ALT_SEQ"/>
    <property type="molecule type" value="Genomic_DNA"/>
</dbReference>
<dbReference type="PIR" id="D81297">
    <property type="entry name" value="D81297"/>
</dbReference>
<dbReference type="RefSeq" id="WP_002851139.1">
    <property type="nucleotide sequence ID" value="NC_002163.1"/>
</dbReference>
<dbReference type="RefSeq" id="YP_002344883.1">
    <property type="nucleotide sequence ID" value="NC_002163.1"/>
</dbReference>
<dbReference type="STRING" id="192222.Cj1504c"/>
<dbReference type="PaxDb" id="192222-Cj1504c"/>
<dbReference type="EnsemblBacteria" id="CAL35610">
    <property type="protein sequence ID" value="CAL35610"/>
    <property type="gene ID" value="Cj1504c"/>
</dbReference>
<dbReference type="GeneID" id="905797"/>
<dbReference type="KEGG" id="cje:Cj1504c"/>
<dbReference type="PATRIC" id="fig|192222.6.peg.1483"/>
<dbReference type="eggNOG" id="COG0709">
    <property type="taxonomic scope" value="Bacteria"/>
</dbReference>
<dbReference type="HOGENOM" id="CLU_032859_0_0_7"/>
<dbReference type="OrthoDB" id="9767928at2"/>
<dbReference type="Proteomes" id="UP000000799">
    <property type="component" value="Chromosome"/>
</dbReference>
<dbReference type="GO" id="GO:0005737">
    <property type="term" value="C:cytoplasm"/>
    <property type="evidence" value="ECO:0007669"/>
    <property type="project" value="TreeGrafter"/>
</dbReference>
<dbReference type="GO" id="GO:0005524">
    <property type="term" value="F:ATP binding"/>
    <property type="evidence" value="ECO:0007669"/>
    <property type="project" value="UniProtKB-UniRule"/>
</dbReference>
<dbReference type="GO" id="GO:0000287">
    <property type="term" value="F:magnesium ion binding"/>
    <property type="evidence" value="ECO:0007669"/>
    <property type="project" value="UniProtKB-UniRule"/>
</dbReference>
<dbReference type="GO" id="GO:0004756">
    <property type="term" value="F:selenide, water dikinase activity"/>
    <property type="evidence" value="ECO:0007669"/>
    <property type="project" value="UniProtKB-UniRule"/>
</dbReference>
<dbReference type="GO" id="GO:0016260">
    <property type="term" value="P:selenocysteine biosynthetic process"/>
    <property type="evidence" value="ECO:0007669"/>
    <property type="project" value="InterPro"/>
</dbReference>
<dbReference type="CDD" id="cd02195">
    <property type="entry name" value="SelD"/>
    <property type="match status" value="1"/>
</dbReference>
<dbReference type="Gene3D" id="3.90.650.10">
    <property type="entry name" value="PurM-like C-terminal domain"/>
    <property type="match status" value="1"/>
</dbReference>
<dbReference type="Gene3D" id="3.30.1330.10">
    <property type="entry name" value="PurM-like, N-terminal domain"/>
    <property type="match status" value="1"/>
</dbReference>
<dbReference type="HAMAP" id="MF_00625">
    <property type="entry name" value="SelD"/>
    <property type="match status" value="1"/>
</dbReference>
<dbReference type="InterPro" id="IPR010918">
    <property type="entry name" value="PurM-like_C_dom"/>
</dbReference>
<dbReference type="InterPro" id="IPR036676">
    <property type="entry name" value="PurM-like_C_sf"/>
</dbReference>
<dbReference type="InterPro" id="IPR016188">
    <property type="entry name" value="PurM-like_N"/>
</dbReference>
<dbReference type="InterPro" id="IPR036921">
    <property type="entry name" value="PurM-like_N_sf"/>
</dbReference>
<dbReference type="InterPro" id="IPR023061">
    <property type="entry name" value="SelD_I"/>
</dbReference>
<dbReference type="InterPro" id="IPR004536">
    <property type="entry name" value="SPS/SelD"/>
</dbReference>
<dbReference type="NCBIfam" id="TIGR00476">
    <property type="entry name" value="selD"/>
    <property type="match status" value="1"/>
</dbReference>
<dbReference type="PANTHER" id="PTHR10256:SF0">
    <property type="entry name" value="INACTIVE SELENIDE, WATER DIKINASE-LIKE PROTEIN-RELATED"/>
    <property type="match status" value="1"/>
</dbReference>
<dbReference type="PANTHER" id="PTHR10256">
    <property type="entry name" value="SELENIDE, WATER DIKINASE"/>
    <property type="match status" value="1"/>
</dbReference>
<dbReference type="Pfam" id="PF00586">
    <property type="entry name" value="AIRS"/>
    <property type="match status" value="1"/>
</dbReference>
<dbReference type="Pfam" id="PF02769">
    <property type="entry name" value="AIRS_C"/>
    <property type="match status" value="1"/>
</dbReference>
<dbReference type="PIRSF" id="PIRSF036407">
    <property type="entry name" value="Selenphspht_syn"/>
    <property type="match status" value="1"/>
</dbReference>
<dbReference type="SUPFAM" id="SSF56042">
    <property type="entry name" value="PurM C-terminal domain-like"/>
    <property type="match status" value="1"/>
</dbReference>
<dbReference type="SUPFAM" id="SSF55326">
    <property type="entry name" value="PurM N-terminal domain-like"/>
    <property type="match status" value="1"/>
</dbReference>
<keyword id="KW-0067">ATP-binding</keyword>
<keyword id="KW-0418">Kinase</keyword>
<keyword id="KW-0460">Magnesium</keyword>
<keyword id="KW-0479">Metal-binding</keyword>
<keyword id="KW-0547">Nucleotide-binding</keyword>
<keyword id="KW-1185">Reference proteome</keyword>
<keyword id="KW-0711">Selenium</keyword>
<keyword id="KW-0712">Selenocysteine</keyword>
<keyword id="KW-0808">Transferase</keyword>
<comment type="function">
    <text evidence="2">Synthesizes selenophosphate from selenide and ATP.</text>
</comment>
<comment type="catalytic activity">
    <reaction evidence="2">
        <text>hydrogenselenide + ATP + H2O = selenophosphate + AMP + phosphate + 2 H(+)</text>
        <dbReference type="Rhea" id="RHEA:18737"/>
        <dbReference type="ChEBI" id="CHEBI:15377"/>
        <dbReference type="ChEBI" id="CHEBI:15378"/>
        <dbReference type="ChEBI" id="CHEBI:16144"/>
        <dbReference type="ChEBI" id="CHEBI:29317"/>
        <dbReference type="ChEBI" id="CHEBI:30616"/>
        <dbReference type="ChEBI" id="CHEBI:43474"/>
        <dbReference type="ChEBI" id="CHEBI:456215"/>
        <dbReference type="EC" id="2.7.9.3"/>
    </reaction>
</comment>
<comment type="cofactor">
    <cofactor evidence="2">
        <name>Mg(2+)</name>
        <dbReference type="ChEBI" id="CHEBI:18420"/>
    </cofactor>
    <text evidence="2">Binds 1 Mg(2+) ion per monomer.</text>
</comment>
<comment type="subunit">
    <text evidence="2">Homodimer.</text>
</comment>
<comment type="similarity">
    <text evidence="2">Belongs to the selenophosphate synthase 1 family. Class I subfamily.</text>
</comment>
<comment type="sequence caution" evidence="3">
    <conflict type="erroneous termination">
        <sequence resource="EMBL-CDS" id="CAL35610"/>
    </conflict>
    <text>Truncated C-terminus.</text>
</comment>
<feature type="chain" id="PRO_0000127618" description="Selenide, water dikinase">
    <location>
        <begin position="1"/>
        <end position="340"/>
    </location>
</feature>
<feature type="active site" evidence="2">
    <location>
        <position position="17"/>
    </location>
</feature>
<feature type="binding site" description="in other chain" evidence="2">
    <location>
        <position position="20"/>
    </location>
    <ligand>
        <name>ATP</name>
        <dbReference type="ChEBI" id="CHEBI:30616"/>
        <note>ligand shared between dimeric partners</note>
    </ligand>
</feature>
<feature type="binding site" description="in other chain" evidence="2">
    <location>
        <begin position="45"/>
        <end position="47"/>
    </location>
    <ligand>
        <name>ATP</name>
        <dbReference type="ChEBI" id="CHEBI:30616"/>
        <note>ligand shared between dimeric partners</note>
    </ligand>
</feature>
<feature type="binding site" evidence="2">
    <location>
        <position position="48"/>
    </location>
    <ligand>
        <name>Mg(2+)</name>
        <dbReference type="ChEBI" id="CHEBI:18420"/>
    </ligand>
</feature>
<feature type="binding site" description="in other chain" evidence="2">
    <location>
        <position position="65"/>
    </location>
    <ligand>
        <name>ATP</name>
        <dbReference type="ChEBI" id="CHEBI:30616"/>
        <note>ligand shared between dimeric partners</note>
    </ligand>
</feature>
<feature type="binding site" description="in other chain" evidence="2">
    <location>
        <position position="88"/>
    </location>
    <ligand>
        <name>ATP</name>
        <dbReference type="ChEBI" id="CHEBI:30616"/>
        <note>ligand shared between dimeric partners</note>
    </ligand>
</feature>
<feature type="binding site" evidence="2">
    <location>
        <position position="88"/>
    </location>
    <ligand>
        <name>Mg(2+)</name>
        <dbReference type="ChEBI" id="CHEBI:18420"/>
    </ligand>
</feature>
<feature type="binding site" evidence="2">
    <location>
        <begin position="136"/>
        <end position="138"/>
    </location>
    <ligand>
        <name>ATP</name>
        <dbReference type="ChEBI" id="CHEBI:30616"/>
        <note>ligand shared between dimeric partners</note>
    </ligand>
</feature>
<feature type="binding site" evidence="2">
    <location>
        <position position="224"/>
    </location>
    <ligand>
        <name>Mg(2+)</name>
        <dbReference type="ChEBI" id="CHEBI:18420"/>
    </ligand>
</feature>
<feature type="site" description="Important for catalytic activity" evidence="2">
    <location>
        <position position="20"/>
    </location>
</feature>
<feature type="non-standard amino acid" description="Selenocysteine" evidence="1">
    <location>
        <position position="17"/>
    </location>
</feature>
<organism>
    <name type="scientific">Campylobacter jejuni subsp. jejuni serotype O:2 (strain ATCC 700819 / NCTC 11168)</name>
    <dbReference type="NCBI Taxonomy" id="192222"/>
    <lineage>
        <taxon>Bacteria</taxon>
        <taxon>Pseudomonadati</taxon>
        <taxon>Campylobacterota</taxon>
        <taxon>Epsilonproteobacteria</taxon>
        <taxon>Campylobacterales</taxon>
        <taxon>Campylobacteraceae</taxon>
        <taxon>Campylobacter</taxon>
    </lineage>
</organism>
<reference key="1">
    <citation type="journal article" date="2000" name="Nature">
        <title>The genome sequence of the food-borne pathogen Campylobacter jejuni reveals hypervariable sequences.</title>
        <authorList>
            <person name="Parkhill J."/>
            <person name="Wren B.W."/>
            <person name="Mungall K.L."/>
            <person name="Ketley J.M."/>
            <person name="Churcher C.M."/>
            <person name="Basham D."/>
            <person name="Chillingworth T."/>
            <person name="Davies R.M."/>
            <person name="Feltwell T."/>
            <person name="Holroyd S."/>
            <person name="Jagels K."/>
            <person name="Karlyshev A.V."/>
            <person name="Moule S."/>
            <person name="Pallen M.J."/>
            <person name="Penn C.W."/>
            <person name="Quail M.A."/>
            <person name="Rajandream M.A."/>
            <person name="Rutherford K.M."/>
            <person name="van Vliet A.H.M."/>
            <person name="Whitehead S."/>
            <person name="Barrell B.G."/>
        </authorList>
    </citation>
    <scope>NUCLEOTIDE SEQUENCE [LARGE SCALE GENOMIC DNA]</scope>
    <source>
        <strain>ATCC 700819 / NCTC 11168</strain>
    </source>
</reference>
<proteinExistence type="inferred from homology"/>
<gene>
    <name evidence="2" type="primary">selD</name>
    <name type="ordered locus">Cj1504c</name>
</gene>
<protein>
    <recommendedName>
        <fullName evidence="2">Selenide, water dikinase</fullName>
        <ecNumber evidence="2">2.7.9.3</ecNumber>
    </recommendedName>
    <alternativeName>
        <fullName evidence="2">Selenium donor protein</fullName>
    </alternativeName>
    <alternativeName>
        <fullName evidence="2">Selenophosphate synthase</fullName>
    </alternativeName>
</protein>
<name>SELD_CAMJE</name>
<evidence type="ECO:0000255" key="1"/>
<evidence type="ECO:0000255" key="2">
    <source>
        <dbReference type="HAMAP-Rule" id="MF_00625"/>
    </source>
</evidence>
<evidence type="ECO:0000305" key="3"/>
<accession>Q9PMF9</accession>
<accession>Q0P8B4</accession>
<sequence length="340" mass="37077">MQYKNQNLTHFVKAAGUAAKLSPGGLKTILNFMQKTPALLSDIGNNEDASVYQISPDLALVQTLDFITPIVDSAYHFGAIAAANALSDVFAMGAEVINALNIVGFDTCNHDLNILKELLEGANDKVKECNALVVGGHTIESTELFFGLSVTGKVHPSKFIANNTSKIGDCIILTKPLGTGILSTALKAQMLNQKHLDIMLKNMIELNYKASQIALKFHPSAMSDVTGFGLLGHLKEMLNKNISFEIFESELPFLDGVKEYFNMGLIPAGAYKNLEFIKELTPDLNEEKLLLCDPQTSGGLLISISEKDSLECLKKLEDENIQAKIIAKVVNKQENDIIIS</sequence>